<organism>
    <name type="scientific">Rickettsia bellii (strain RML369-C)</name>
    <dbReference type="NCBI Taxonomy" id="336407"/>
    <lineage>
        <taxon>Bacteria</taxon>
        <taxon>Pseudomonadati</taxon>
        <taxon>Pseudomonadota</taxon>
        <taxon>Alphaproteobacteria</taxon>
        <taxon>Rickettsiales</taxon>
        <taxon>Rickettsiaceae</taxon>
        <taxon>Rickettsieae</taxon>
        <taxon>Rickettsia</taxon>
        <taxon>belli group</taxon>
    </lineage>
</organism>
<reference key="1">
    <citation type="journal article" date="2006" name="PLoS Genet.">
        <title>Genome sequence of Rickettsia bellii illuminates the role of amoebae in gene exchanges between intracellular pathogens.</title>
        <authorList>
            <person name="Ogata H."/>
            <person name="La Scola B."/>
            <person name="Audic S."/>
            <person name="Renesto P."/>
            <person name="Blanc G."/>
            <person name="Robert C."/>
            <person name="Fournier P.-E."/>
            <person name="Claverie J.-M."/>
            <person name="Raoult D."/>
        </authorList>
    </citation>
    <scope>NUCLEOTIDE SEQUENCE [LARGE SCALE GENOMIC DNA]</scope>
    <source>
        <strain>RML369-C</strain>
    </source>
</reference>
<accession>Q1RHB0</accession>
<evidence type="ECO:0000255" key="1">
    <source>
        <dbReference type="HAMAP-Rule" id="MF_02040"/>
    </source>
</evidence>
<gene>
    <name type="primary">mrp</name>
    <name type="ordered locus">RBE_1173</name>
</gene>
<dbReference type="EMBL" id="CP000087">
    <property type="protein sequence ID" value="ABE05254.1"/>
    <property type="molecule type" value="Genomic_DNA"/>
</dbReference>
<dbReference type="RefSeq" id="WP_011477832.1">
    <property type="nucleotide sequence ID" value="NC_007940.1"/>
</dbReference>
<dbReference type="SMR" id="Q1RHB0"/>
<dbReference type="KEGG" id="rbe:RBE_1173"/>
<dbReference type="eggNOG" id="COG0489">
    <property type="taxonomic scope" value="Bacteria"/>
</dbReference>
<dbReference type="HOGENOM" id="CLU_024839_0_0_5"/>
<dbReference type="OrthoDB" id="9809679at2"/>
<dbReference type="Proteomes" id="UP000001951">
    <property type="component" value="Chromosome"/>
</dbReference>
<dbReference type="GO" id="GO:0051539">
    <property type="term" value="F:4 iron, 4 sulfur cluster binding"/>
    <property type="evidence" value="ECO:0007669"/>
    <property type="project" value="TreeGrafter"/>
</dbReference>
<dbReference type="GO" id="GO:0005524">
    <property type="term" value="F:ATP binding"/>
    <property type="evidence" value="ECO:0007669"/>
    <property type="project" value="UniProtKB-UniRule"/>
</dbReference>
<dbReference type="GO" id="GO:0016887">
    <property type="term" value="F:ATP hydrolysis activity"/>
    <property type="evidence" value="ECO:0007669"/>
    <property type="project" value="UniProtKB-UniRule"/>
</dbReference>
<dbReference type="GO" id="GO:0140663">
    <property type="term" value="F:ATP-dependent FeS chaperone activity"/>
    <property type="evidence" value="ECO:0007669"/>
    <property type="project" value="InterPro"/>
</dbReference>
<dbReference type="GO" id="GO:0046872">
    <property type="term" value="F:metal ion binding"/>
    <property type="evidence" value="ECO:0007669"/>
    <property type="project" value="UniProtKB-KW"/>
</dbReference>
<dbReference type="GO" id="GO:0016226">
    <property type="term" value="P:iron-sulfur cluster assembly"/>
    <property type="evidence" value="ECO:0007669"/>
    <property type="project" value="InterPro"/>
</dbReference>
<dbReference type="CDD" id="cd02037">
    <property type="entry name" value="Mrp_NBP35"/>
    <property type="match status" value="1"/>
</dbReference>
<dbReference type="Gene3D" id="3.40.50.300">
    <property type="entry name" value="P-loop containing nucleotide triphosphate hydrolases"/>
    <property type="match status" value="1"/>
</dbReference>
<dbReference type="HAMAP" id="MF_02040">
    <property type="entry name" value="Mrp_NBP35"/>
    <property type="match status" value="1"/>
</dbReference>
<dbReference type="InterPro" id="IPR000808">
    <property type="entry name" value="Mrp-like_CS"/>
</dbReference>
<dbReference type="InterPro" id="IPR019591">
    <property type="entry name" value="Mrp/NBP35_ATP-bd"/>
</dbReference>
<dbReference type="InterPro" id="IPR044304">
    <property type="entry name" value="NUBPL-like"/>
</dbReference>
<dbReference type="InterPro" id="IPR027417">
    <property type="entry name" value="P-loop_NTPase"/>
</dbReference>
<dbReference type="InterPro" id="IPR033756">
    <property type="entry name" value="YlxH/NBP35"/>
</dbReference>
<dbReference type="PANTHER" id="PTHR42961">
    <property type="entry name" value="IRON-SULFUR PROTEIN NUBPL"/>
    <property type="match status" value="1"/>
</dbReference>
<dbReference type="PANTHER" id="PTHR42961:SF2">
    <property type="entry name" value="IRON-SULFUR PROTEIN NUBPL"/>
    <property type="match status" value="1"/>
</dbReference>
<dbReference type="Pfam" id="PF10609">
    <property type="entry name" value="ParA"/>
    <property type="match status" value="1"/>
</dbReference>
<dbReference type="SUPFAM" id="SSF52540">
    <property type="entry name" value="P-loop containing nucleoside triphosphate hydrolases"/>
    <property type="match status" value="1"/>
</dbReference>
<dbReference type="PROSITE" id="PS01215">
    <property type="entry name" value="MRP"/>
    <property type="match status" value="1"/>
</dbReference>
<keyword id="KW-0067">ATP-binding</keyword>
<keyword id="KW-0378">Hydrolase</keyword>
<keyword id="KW-0408">Iron</keyword>
<keyword id="KW-0411">Iron-sulfur</keyword>
<keyword id="KW-0479">Metal-binding</keyword>
<keyword id="KW-0547">Nucleotide-binding</keyword>
<sequence length="318" mass="35185">MADLHQNQIIDKLHNIAFKDGTFLKQVISNIIIKHNNVGFSIDISGIDKLEVEEIKNTAIKKLNEIVGIGKITIVFTESKTVEKKPQKPKHFVENVKKIILVASGKGGVGKSTISALIAQQLSLENHRVGIVDADIYGPSIPHIFGINEVPQTVGGRIIPVRAKNIEVISIGFFVKNYSAIIWRGPMASKTIYQLLSVTKWDNLDYLIIDMPPGTGDIHLSMLENYHLNGVVIVTTPQKMSEIDVVRSIDLYQKLNLPIIGIIENMSDLFDGNSGSHLSQKYNIPLIAQIPVIPKIANACDKSLPLTDLLKLSLKEYL</sequence>
<name>APBC_RICBR</name>
<comment type="function">
    <text evidence="1">Binds and transfers iron-sulfur (Fe-S) clusters to target apoproteins. Can hydrolyze ATP.</text>
</comment>
<comment type="subunit">
    <text evidence="1">Homodimer.</text>
</comment>
<comment type="similarity">
    <text evidence="1">Belongs to the Mrp/NBP35 ATP-binding proteins family.</text>
</comment>
<protein>
    <recommendedName>
        <fullName evidence="1">Iron-sulfur cluster carrier protein</fullName>
    </recommendedName>
</protein>
<proteinExistence type="inferred from homology"/>
<feature type="chain" id="PRO_0000280999" description="Iron-sulfur cluster carrier protein">
    <location>
        <begin position="1"/>
        <end position="318"/>
    </location>
</feature>
<feature type="binding site" evidence="1">
    <location>
        <begin position="105"/>
        <end position="112"/>
    </location>
    <ligand>
        <name>ATP</name>
        <dbReference type="ChEBI" id="CHEBI:30616"/>
    </ligand>
</feature>